<keyword id="KW-0240">DNA-directed RNA polymerase</keyword>
<keyword id="KW-0548">Nucleotidyltransferase</keyword>
<keyword id="KW-0934">Plastid</keyword>
<keyword id="KW-0804">Transcription</keyword>
<keyword id="KW-0808">Transferase</keyword>
<evidence type="ECO:0000255" key="1">
    <source>
        <dbReference type="HAMAP-Rule" id="MF_00059"/>
    </source>
</evidence>
<feature type="chain" id="PRO_0000225919" description="DNA-directed RNA polymerase subunit alpha">
    <location>
        <begin position="1"/>
        <end position="332"/>
    </location>
</feature>
<feature type="region of interest" description="Alpha N-terminal domain (alpha-NTD)" evidence="1">
    <location>
        <begin position="1"/>
        <end position="231"/>
    </location>
</feature>
<feature type="region of interest" description="Alpha C-terminal domain (alpha-CTD)" evidence="1">
    <location>
        <begin position="262"/>
        <end position="332"/>
    </location>
</feature>
<proteinExistence type="inferred from homology"/>
<accession>Q49CA2</accession>
<sequence length="332" mass="37964">MVREKVTVSTRTLQWKCVESRTDSKRLYYGRFILSPLMKGQADTIGIALRRALLAEIEGTRITRVKFANASHEYSTIAGIQESVHEILMNLKEIVLRSNLYGTCDASISFKGPGYVTAEDIILPPHVEIVDSTQHIAWLTEPIDLCIGLKIERNRGYFIKTHANFEDGSYPIDAVFMPVQNANHSIHSYGNEKQEILFLEIWTNGSLTPKEALHEASRNLIDLFIPFLHMEKENLPLEDADHTIPLSPFTVYYKVAKNKKKLSLESLFIDQLEFPPKIYNCLKKSNIFTLLDLLNNSQEDLIKIEHFRLEDVKQILAILGKHFALDLPKNLN</sequence>
<name>RPOA_CUSJA</name>
<reference key="1">
    <citation type="journal article" date="2005" name="J. Mol. Evol.">
        <title>Down the slippery slope: plastid genome evolution in Convolvulaceae.</title>
        <authorList>
            <person name="Stefanovic S."/>
            <person name="Olmstead R.G."/>
        </authorList>
    </citation>
    <scope>NUCLEOTIDE SEQUENCE [GENOMIC DNA]</scope>
</reference>
<comment type="function">
    <text evidence="1">DNA-dependent RNA polymerase catalyzes the transcription of DNA into RNA using the four ribonucleoside triphosphates as substrates.</text>
</comment>
<comment type="catalytic activity">
    <reaction evidence="1">
        <text>RNA(n) + a ribonucleoside 5'-triphosphate = RNA(n+1) + diphosphate</text>
        <dbReference type="Rhea" id="RHEA:21248"/>
        <dbReference type="Rhea" id="RHEA-COMP:14527"/>
        <dbReference type="Rhea" id="RHEA-COMP:17342"/>
        <dbReference type="ChEBI" id="CHEBI:33019"/>
        <dbReference type="ChEBI" id="CHEBI:61557"/>
        <dbReference type="ChEBI" id="CHEBI:140395"/>
        <dbReference type="EC" id="2.7.7.6"/>
    </reaction>
</comment>
<comment type="subunit">
    <text evidence="1">In plastids the minimal PEP RNA polymerase catalytic core is composed of four subunits: alpha, beta, beta', and beta''. When a (nuclear-encoded) sigma factor is associated with the core the holoenzyme is formed, which can initiate transcription.</text>
</comment>
<comment type="subcellular location">
    <subcellularLocation>
        <location>Plastid</location>
    </subcellularLocation>
</comment>
<comment type="domain">
    <text evidence="1">The N-terminal domain is essential for RNAP assembly and basal transcription, whereas the C-terminal domain is involved in interaction with transcriptional regulators and with upstream promoter elements.</text>
</comment>
<comment type="similarity">
    <text evidence="1">Belongs to the RNA polymerase alpha chain family.</text>
</comment>
<geneLocation type="plastid"/>
<organism>
    <name type="scientific">Cuscuta japonica</name>
    <name type="common">Japanese dodder</name>
    <dbReference type="NCBI Taxonomy" id="81913"/>
    <lineage>
        <taxon>Eukaryota</taxon>
        <taxon>Viridiplantae</taxon>
        <taxon>Streptophyta</taxon>
        <taxon>Embryophyta</taxon>
        <taxon>Tracheophyta</taxon>
        <taxon>Spermatophyta</taxon>
        <taxon>Magnoliopsida</taxon>
        <taxon>eudicotyledons</taxon>
        <taxon>Gunneridae</taxon>
        <taxon>Pentapetalae</taxon>
        <taxon>asterids</taxon>
        <taxon>lamiids</taxon>
        <taxon>Solanales</taxon>
        <taxon>Convolvulaceae</taxon>
        <taxon>Cuscuteae</taxon>
        <taxon>Cuscuta</taxon>
        <taxon>Cuscuta subgen. Monogynella</taxon>
    </lineage>
</organism>
<dbReference type="EC" id="2.7.7.6" evidence="1"/>
<dbReference type="EMBL" id="AY936353">
    <property type="protein sequence ID" value="AAY58033.1"/>
    <property type="molecule type" value="Genomic_DNA"/>
</dbReference>
<dbReference type="RefSeq" id="YP_010273568.1">
    <property type="nucleotide sequence ID" value="NC_060789.1"/>
</dbReference>
<dbReference type="SMR" id="Q49CA2"/>
<dbReference type="GeneID" id="70630218"/>
<dbReference type="GO" id="GO:0000428">
    <property type="term" value="C:DNA-directed RNA polymerase complex"/>
    <property type="evidence" value="ECO:0007669"/>
    <property type="project" value="UniProtKB-KW"/>
</dbReference>
<dbReference type="GO" id="GO:0005739">
    <property type="term" value="C:mitochondrion"/>
    <property type="evidence" value="ECO:0007669"/>
    <property type="project" value="GOC"/>
</dbReference>
<dbReference type="GO" id="GO:0009536">
    <property type="term" value="C:plastid"/>
    <property type="evidence" value="ECO:0007669"/>
    <property type="project" value="UniProtKB-SubCell"/>
</dbReference>
<dbReference type="GO" id="GO:0003677">
    <property type="term" value="F:DNA binding"/>
    <property type="evidence" value="ECO:0007669"/>
    <property type="project" value="UniProtKB-UniRule"/>
</dbReference>
<dbReference type="GO" id="GO:0003899">
    <property type="term" value="F:DNA-directed RNA polymerase activity"/>
    <property type="evidence" value="ECO:0007669"/>
    <property type="project" value="UniProtKB-UniRule"/>
</dbReference>
<dbReference type="GO" id="GO:0046983">
    <property type="term" value="F:protein dimerization activity"/>
    <property type="evidence" value="ECO:0007669"/>
    <property type="project" value="InterPro"/>
</dbReference>
<dbReference type="GO" id="GO:0006351">
    <property type="term" value="P:DNA-templated transcription"/>
    <property type="evidence" value="ECO:0007669"/>
    <property type="project" value="UniProtKB-UniRule"/>
</dbReference>
<dbReference type="CDD" id="cd06928">
    <property type="entry name" value="RNAP_alpha_NTD"/>
    <property type="match status" value="1"/>
</dbReference>
<dbReference type="FunFam" id="2.170.120.12:FF:000001">
    <property type="entry name" value="DNA-directed RNA polymerase subunit alpha"/>
    <property type="match status" value="1"/>
</dbReference>
<dbReference type="Gene3D" id="1.10.150.20">
    <property type="entry name" value="5' to 3' exonuclease, C-terminal subdomain"/>
    <property type="match status" value="1"/>
</dbReference>
<dbReference type="Gene3D" id="2.170.120.12">
    <property type="entry name" value="DNA-directed RNA polymerase, insert domain"/>
    <property type="match status" value="1"/>
</dbReference>
<dbReference type="Gene3D" id="3.30.1360.10">
    <property type="entry name" value="RNA polymerase, RBP11-like subunit"/>
    <property type="match status" value="1"/>
</dbReference>
<dbReference type="HAMAP" id="MF_00059">
    <property type="entry name" value="RNApol_bact_RpoA"/>
    <property type="match status" value="1"/>
</dbReference>
<dbReference type="InterPro" id="IPR011262">
    <property type="entry name" value="DNA-dir_RNA_pol_insert"/>
</dbReference>
<dbReference type="InterPro" id="IPR011263">
    <property type="entry name" value="DNA-dir_RNA_pol_RpoA/D/Rpb3"/>
</dbReference>
<dbReference type="InterPro" id="IPR011773">
    <property type="entry name" value="DNA-dir_RpoA"/>
</dbReference>
<dbReference type="InterPro" id="IPR036603">
    <property type="entry name" value="RBP11-like"/>
</dbReference>
<dbReference type="InterPro" id="IPR011260">
    <property type="entry name" value="RNAP_asu_C"/>
</dbReference>
<dbReference type="InterPro" id="IPR036643">
    <property type="entry name" value="RNApol_insert_sf"/>
</dbReference>
<dbReference type="NCBIfam" id="TIGR02027">
    <property type="entry name" value="rpoA"/>
    <property type="match status" value="1"/>
</dbReference>
<dbReference type="Pfam" id="PF01000">
    <property type="entry name" value="RNA_pol_A_bac"/>
    <property type="match status" value="1"/>
</dbReference>
<dbReference type="Pfam" id="PF03118">
    <property type="entry name" value="RNA_pol_A_CTD"/>
    <property type="match status" value="1"/>
</dbReference>
<dbReference type="Pfam" id="PF01193">
    <property type="entry name" value="RNA_pol_L"/>
    <property type="match status" value="1"/>
</dbReference>
<dbReference type="SMART" id="SM00662">
    <property type="entry name" value="RPOLD"/>
    <property type="match status" value="1"/>
</dbReference>
<dbReference type="SUPFAM" id="SSF47789">
    <property type="entry name" value="C-terminal domain of RNA polymerase alpha subunit"/>
    <property type="match status" value="1"/>
</dbReference>
<dbReference type="SUPFAM" id="SSF56553">
    <property type="entry name" value="Insert subdomain of RNA polymerase alpha subunit"/>
    <property type="match status" value="1"/>
</dbReference>
<dbReference type="SUPFAM" id="SSF55257">
    <property type="entry name" value="RBP11-like subunits of RNA polymerase"/>
    <property type="match status" value="1"/>
</dbReference>
<gene>
    <name evidence="1" type="primary">rpoA</name>
</gene>
<protein>
    <recommendedName>
        <fullName evidence="1">DNA-directed RNA polymerase subunit alpha</fullName>
        <shortName evidence="1">PEP</shortName>
        <ecNumber evidence="1">2.7.7.6</ecNumber>
    </recommendedName>
    <alternativeName>
        <fullName evidence="1">Plastid-encoded RNA polymerase subunit alpha</fullName>
        <shortName evidence="1">RNA polymerase subunit alpha</shortName>
    </alternativeName>
</protein>